<sequence>MDGGHSPDRHAAAAAGEPVRSRWTPKPEQILILESIFNSGMVNPPKDETVRIRKLLERFGAVGDANVFYWFQNRRSRSRRRQRQLQAQAQAAAAAASSGSPPTASSGGLAPGHAGSPASSLGMFAHGAAGYSSSSSSSWPSSPPSVGMMMGDVDYGGGGDDLFAISRQMGYMDGGGGSSSSAAAGQHQQQQLYYSCQPATMTVFINGVATEVPRGPIDLRSMFGQDVMLVHSTGALLPANEYGILLHSLQMGESYFLVTRSS</sequence>
<dbReference type="EMBL" id="AP008213">
    <property type="protein sequence ID" value="BAF22586.1"/>
    <property type="molecule type" value="Genomic_DNA"/>
</dbReference>
<dbReference type="EMBL" id="AP014963">
    <property type="protein sequence ID" value="BAT03276.1"/>
    <property type="molecule type" value="Genomic_DNA"/>
</dbReference>
<dbReference type="EMBL" id="CM000144">
    <property type="protein sequence ID" value="EEE67836.1"/>
    <property type="molecule type" value="Genomic_DNA"/>
</dbReference>
<dbReference type="EMBL" id="AK063503">
    <property type="protein sequence ID" value="BAG88739.1"/>
    <property type="molecule type" value="mRNA"/>
</dbReference>
<dbReference type="EMBL" id="AK073232">
    <property type="protein sequence ID" value="BAG93352.1"/>
    <property type="molecule type" value="mRNA"/>
</dbReference>
<dbReference type="RefSeq" id="XP_015645719.1">
    <property type="nucleotide sequence ID" value="XM_015790233.1"/>
</dbReference>
<dbReference type="SMR" id="Q0D3I7"/>
<dbReference type="FunCoup" id="Q0D3I7">
    <property type="interactions" value="2118"/>
</dbReference>
<dbReference type="STRING" id="39947.Q0D3I7"/>
<dbReference type="PaxDb" id="39947-Q0D3I7"/>
<dbReference type="EnsemblPlants" id="Os07t0684900-01">
    <property type="protein sequence ID" value="Os07t0684900-01"/>
    <property type="gene ID" value="Os07g0684900"/>
</dbReference>
<dbReference type="Gramene" id="Os07t0684900-01">
    <property type="protein sequence ID" value="Os07t0684900-01"/>
    <property type="gene ID" value="Os07g0684900"/>
</dbReference>
<dbReference type="KEGG" id="dosa:Os07g0684900"/>
<dbReference type="eggNOG" id="ENOG502QUIQ">
    <property type="taxonomic scope" value="Eukaryota"/>
</dbReference>
<dbReference type="HOGENOM" id="CLU_030463_0_0_1"/>
<dbReference type="InParanoid" id="Q0D3I7"/>
<dbReference type="OMA" id="GHHLMAD"/>
<dbReference type="OrthoDB" id="670226at2759"/>
<dbReference type="Proteomes" id="UP000000763">
    <property type="component" value="Chromosome 7"/>
</dbReference>
<dbReference type="Proteomes" id="UP000007752">
    <property type="component" value="Chromosome 7"/>
</dbReference>
<dbReference type="Proteomes" id="UP000059680">
    <property type="component" value="Chromosome 7"/>
</dbReference>
<dbReference type="GO" id="GO:0005634">
    <property type="term" value="C:nucleus"/>
    <property type="evidence" value="ECO:0000314"/>
    <property type="project" value="UniProtKB"/>
</dbReference>
<dbReference type="GO" id="GO:0003677">
    <property type="term" value="F:DNA binding"/>
    <property type="evidence" value="ECO:0007669"/>
    <property type="project" value="UniProtKB-KW"/>
</dbReference>
<dbReference type="GO" id="GO:0003700">
    <property type="term" value="F:DNA-binding transcription factor activity"/>
    <property type="evidence" value="ECO:0000314"/>
    <property type="project" value="UniProtKB"/>
</dbReference>
<dbReference type="GO" id="GO:0048830">
    <property type="term" value="P:adventitious root development"/>
    <property type="evidence" value="ECO:0007669"/>
    <property type="project" value="InterPro"/>
</dbReference>
<dbReference type="GO" id="GO:0006351">
    <property type="term" value="P:DNA-templated transcription"/>
    <property type="evidence" value="ECO:0000314"/>
    <property type="project" value="UniProtKB"/>
</dbReference>
<dbReference type="GO" id="GO:0010311">
    <property type="term" value="P:lateral root formation"/>
    <property type="evidence" value="ECO:0000315"/>
    <property type="project" value="UniProtKB"/>
</dbReference>
<dbReference type="GO" id="GO:0048364">
    <property type="term" value="P:root development"/>
    <property type="evidence" value="ECO:0000315"/>
    <property type="project" value="UniProtKB"/>
</dbReference>
<dbReference type="FunFam" id="1.10.10.60:FF:000118">
    <property type="entry name" value="WUSCHEL-related homeobox 11"/>
    <property type="match status" value="1"/>
</dbReference>
<dbReference type="Gene3D" id="1.10.10.60">
    <property type="entry name" value="Homeodomain-like"/>
    <property type="match status" value="1"/>
</dbReference>
<dbReference type="InterPro" id="IPR001356">
    <property type="entry name" value="HD"/>
</dbReference>
<dbReference type="InterPro" id="IPR009057">
    <property type="entry name" value="Homeodomain-like_sf"/>
</dbReference>
<dbReference type="InterPro" id="IPR044558">
    <property type="entry name" value="WOX11-like"/>
</dbReference>
<dbReference type="PANTHER" id="PTHR46998">
    <property type="entry name" value="WUSCHEL-RELATED HOMEOBOX 11"/>
    <property type="match status" value="1"/>
</dbReference>
<dbReference type="PANTHER" id="PTHR46998:SF11">
    <property type="entry name" value="WUSCHEL-RELATED HOMEOBOX 11"/>
    <property type="match status" value="1"/>
</dbReference>
<dbReference type="Pfam" id="PF00046">
    <property type="entry name" value="Homeodomain"/>
    <property type="match status" value="1"/>
</dbReference>
<dbReference type="SMART" id="SM00389">
    <property type="entry name" value="HOX"/>
    <property type="match status" value="1"/>
</dbReference>
<dbReference type="SUPFAM" id="SSF46689">
    <property type="entry name" value="Homeodomain-like"/>
    <property type="match status" value="1"/>
</dbReference>
<dbReference type="PROSITE" id="PS50071">
    <property type="entry name" value="HOMEOBOX_2"/>
    <property type="match status" value="1"/>
</dbReference>
<protein>
    <recommendedName>
        <fullName evidence="8">WUSCHEL-related homeobox 11</fullName>
        <shortName evidence="8">OsWOX11</shortName>
    </recommendedName>
</protein>
<gene>
    <name evidence="8" type="primary">WOX11</name>
    <name evidence="10" type="ordered locus">Os07g0684900</name>
    <name evidence="9" type="ordered locus">LOC_Os07g48560</name>
    <name evidence="11" type="ORF">OsJ_25623</name>
</gene>
<comment type="function">
    <text evidence="3 4 5 6 7">Transcription factor involved in crown root development (PubMed:19258439, PubMed:26307379, PubMed:29740464). Promotes the development of crown roots (both initiation and elongation), main components of the fibrous root system (PubMed:19258439, PubMed:26307379, PubMed:29740464). Regulates the expression of genes required for crown root development, and hormone-responsive genes involved in cytokinin signaling (e.g. RR1, RR2, RR3 and RR4), and auxin signaling (e.g. IAA5, IAA11, IAA23 and IAA31) (PubMed:26307379). Functions dowstream of the auxin biosynthetic genes YUCCA1 in the promotion of crown root development (PubMed:29740464). Recruits the ADA2-GCN5 histone acetyltransferase (HAT) module to regulate crown root cell proliferation and stem cell maintenance of root meristem (PubMed:28487409). Together with the ADA2-GCN5 HAT module targets and regulates a set of root-specific genes involved in carbon metabolism, cell wall biosynthesis, and auxin transport and response (PubMed:28487409). Functions upstream of several genes controlling root development, cytokinin homeostasis/signaling, stress response, and redox metabolic processes (PubMed:28830102).</text>
</comment>
<comment type="subunit">
    <text evidence="4 5">Interacts with ERF3 (PubMed:26307379). Interacts (via N-terminus) with ADA2 (PubMed:28487409).</text>
</comment>
<comment type="subcellular location">
    <subcellularLocation>
        <location evidence="1 3 4">Nucleus</location>
    </subcellularLocation>
</comment>
<comment type="tissue specificity">
    <text evidence="3 4">Expressed in crown roots (PubMed:19258439, PubMed:26307379). Expressed in the shoot apical meristem (SAM), leaf primordia, and young leaves (PubMed:26307379).</text>
</comment>
<comment type="developmental stage">
    <text evidence="3 4">In crown roots, mainly expressed after crown roots emergence but barely in crown root initials.</text>
</comment>
<comment type="induction">
    <text evidence="3">Induced by auxin.</text>
</comment>
<comment type="disruption phenotype">
    <text evidence="3 4">Reduced crown root development (PubMed:19258439, PubMed:26307379). Severe growth defects and lethality in adult plants (PubMed:19258439).</text>
</comment>
<comment type="miscellaneous">
    <text evidence="7">Overexpression of WOX11 stimulates ectopic crown root development.</text>
</comment>
<comment type="similarity">
    <text evidence="9">Belongs to the WUS homeobox family.</text>
</comment>
<keyword id="KW-0217">Developmental protein</keyword>
<keyword id="KW-0238">DNA-binding</keyword>
<keyword id="KW-0371">Homeobox</keyword>
<keyword id="KW-0539">Nucleus</keyword>
<keyword id="KW-1185">Reference proteome</keyword>
<keyword id="KW-0804">Transcription</keyword>
<keyword id="KW-0805">Transcription regulation</keyword>
<accession>Q0D3I7</accession>
<accession>B7E8P2</accession>
<organism>
    <name type="scientific">Oryza sativa subsp. japonica</name>
    <name type="common">Rice</name>
    <dbReference type="NCBI Taxonomy" id="39947"/>
    <lineage>
        <taxon>Eukaryota</taxon>
        <taxon>Viridiplantae</taxon>
        <taxon>Streptophyta</taxon>
        <taxon>Embryophyta</taxon>
        <taxon>Tracheophyta</taxon>
        <taxon>Spermatophyta</taxon>
        <taxon>Magnoliopsida</taxon>
        <taxon>Liliopsida</taxon>
        <taxon>Poales</taxon>
        <taxon>Poaceae</taxon>
        <taxon>BOP clade</taxon>
        <taxon>Oryzoideae</taxon>
        <taxon>Oryzeae</taxon>
        <taxon>Oryzinae</taxon>
        <taxon>Oryza</taxon>
        <taxon>Oryza sativa</taxon>
    </lineage>
</organism>
<evidence type="ECO:0000255" key="1">
    <source>
        <dbReference type="PROSITE-ProRule" id="PRU00108"/>
    </source>
</evidence>
<evidence type="ECO:0000256" key="2">
    <source>
        <dbReference type="SAM" id="MobiDB-lite"/>
    </source>
</evidence>
<evidence type="ECO:0000269" key="3">
    <source>
    </source>
</evidence>
<evidence type="ECO:0000269" key="4">
    <source>
    </source>
</evidence>
<evidence type="ECO:0000269" key="5">
    <source>
    </source>
</evidence>
<evidence type="ECO:0000269" key="6">
    <source>
    </source>
</evidence>
<evidence type="ECO:0000269" key="7">
    <source>
    </source>
</evidence>
<evidence type="ECO:0000303" key="8">
    <source>
    </source>
</evidence>
<evidence type="ECO:0000305" key="9"/>
<evidence type="ECO:0000312" key="10">
    <source>
        <dbReference type="EMBL" id="BAT03276.1"/>
    </source>
</evidence>
<evidence type="ECO:0000312" key="11">
    <source>
        <dbReference type="EMBL" id="EEE67836.1"/>
    </source>
</evidence>
<feature type="chain" id="PRO_0000308648" description="WUSCHEL-related homeobox 11">
    <location>
        <begin position="1"/>
        <end position="262"/>
    </location>
</feature>
<feature type="DNA-binding region" description="Homeobox; WUS-type" evidence="1">
    <location>
        <begin position="18"/>
        <end position="82"/>
    </location>
</feature>
<feature type="region of interest" description="Disordered" evidence="2">
    <location>
        <begin position="1"/>
        <end position="21"/>
    </location>
</feature>
<feature type="region of interest" description="Disordered" evidence="2">
    <location>
        <begin position="79"/>
        <end position="115"/>
    </location>
</feature>
<feature type="compositionally biased region" description="Basic and acidic residues" evidence="2">
    <location>
        <begin position="1"/>
        <end position="11"/>
    </location>
</feature>
<feature type="compositionally biased region" description="Low complexity" evidence="2">
    <location>
        <begin position="84"/>
        <end position="112"/>
    </location>
</feature>
<proteinExistence type="evidence at protein level"/>
<reference key="1">
    <citation type="journal article" date="2005" name="Nature">
        <title>The map-based sequence of the rice genome.</title>
        <authorList>
            <consortium name="International rice genome sequencing project (IRGSP)"/>
        </authorList>
    </citation>
    <scope>NUCLEOTIDE SEQUENCE [LARGE SCALE GENOMIC DNA]</scope>
    <source>
        <strain>cv. Nipponbare</strain>
    </source>
</reference>
<reference key="2">
    <citation type="journal article" date="2008" name="Nucleic Acids Res.">
        <title>The rice annotation project database (RAP-DB): 2008 update.</title>
        <authorList>
            <consortium name="The rice annotation project (RAP)"/>
        </authorList>
    </citation>
    <scope>GENOME REANNOTATION</scope>
    <source>
        <strain>cv. Nipponbare</strain>
    </source>
</reference>
<reference key="3">
    <citation type="journal article" date="2013" name="Rice">
        <title>Improvement of the Oryza sativa Nipponbare reference genome using next generation sequence and optical map data.</title>
        <authorList>
            <person name="Kawahara Y."/>
            <person name="de la Bastide M."/>
            <person name="Hamilton J.P."/>
            <person name="Kanamori H."/>
            <person name="McCombie W.R."/>
            <person name="Ouyang S."/>
            <person name="Schwartz D.C."/>
            <person name="Tanaka T."/>
            <person name="Wu J."/>
            <person name="Zhou S."/>
            <person name="Childs K.L."/>
            <person name="Davidson R.M."/>
            <person name="Lin H."/>
            <person name="Quesada-Ocampo L."/>
            <person name="Vaillancourt B."/>
            <person name="Sakai H."/>
            <person name="Lee S.S."/>
            <person name="Kim J."/>
            <person name="Numa H."/>
            <person name="Itoh T."/>
            <person name="Buell C.R."/>
            <person name="Matsumoto T."/>
        </authorList>
    </citation>
    <scope>GENOME REANNOTATION</scope>
    <source>
        <strain>cv. Nipponbare</strain>
    </source>
</reference>
<reference key="4">
    <citation type="journal article" date="2005" name="PLoS Biol.">
        <title>The genomes of Oryza sativa: a history of duplications.</title>
        <authorList>
            <person name="Yu J."/>
            <person name="Wang J."/>
            <person name="Lin W."/>
            <person name="Li S."/>
            <person name="Li H."/>
            <person name="Zhou J."/>
            <person name="Ni P."/>
            <person name="Dong W."/>
            <person name="Hu S."/>
            <person name="Zeng C."/>
            <person name="Zhang J."/>
            <person name="Zhang Y."/>
            <person name="Li R."/>
            <person name="Xu Z."/>
            <person name="Li S."/>
            <person name="Li X."/>
            <person name="Zheng H."/>
            <person name="Cong L."/>
            <person name="Lin L."/>
            <person name="Yin J."/>
            <person name="Geng J."/>
            <person name="Li G."/>
            <person name="Shi J."/>
            <person name="Liu J."/>
            <person name="Lv H."/>
            <person name="Li J."/>
            <person name="Wang J."/>
            <person name="Deng Y."/>
            <person name="Ran L."/>
            <person name="Shi X."/>
            <person name="Wang X."/>
            <person name="Wu Q."/>
            <person name="Li C."/>
            <person name="Ren X."/>
            <person name="Wang J."/>
            <person name="Wang X."/>
            <person name="Li D."/>
            <person name="Liu D."/>
            <person name="Zhang X."/>
            <person name="Ji Z."/>
            <person name="Zhao W."/>
            <person name="Sun Y."/>
            <person name="Zhang Z."/>
            <person name="Bao J."/>
            <person name="Han Y."/>
            <person name="Dong L."/>
            <person name="Ji J."/>
            <person name="Chen P."/>
            <person name="Wu S."/>
            <person name="Liu J."/>
            <person name="Xiao Y."/>
            <person name="Bu D."/>
            <person name="Tan J."/>
            <person name="Yang L."/>
            <person name="Ye C."/>
            <person name="Zhang J."/>
            <person name="Xu J."/>
            <person name="Zhou Y."/>
            <person name="Yu Y."/>
            <person name="Zhang B."/>
            <person name="Zhuang S."/>
            <person name="Wei H."/>
            <person name="Liu B."/>
            <person name="Lei M."/>
            <person name="Yu H."/>
            <person name="Li Y."/>
            <person name="Xu H."/>
            <person name="Wei S."/>
            <person name="He X."/>
            <person name="Fang L."/>
            <person name="Zhang Z."/>
            <person name="Zhang Y."/>
            <person name="Huang X."/>
            <person name="Su Z."/>
            <person name="Tong W."/>
            <person name="Li J."/>
            <person name="Tong Z."/>
            <person name="Li S."/>
            <person name="Ye J."/>
            <person name="Wang L."/>
            <person name="Fang L."/>
            <person name="Lei T."/>
            <person name="Chen C.-S."/>
            <person name="Chen H.-C."/>
            <person name="Xu Z."/>
            <person name="Li H."/>
            <person name="Huang H."/>
            <person name="Zhang F."/>
            <person name="Xu H."/>
            <person name="Li N."/>
            <person name="Zhao C."/>
            <person name="Li S."/>
            <person name="Dong L."/>
            <person name="Huang Y."/>
            <person name="Li L."/>
            <person name="Xi Y."/>
            <person name="Qi Q."/>
            <person name="Li W."/>
            <person name="Zhang B."/>
            <person name="Hu W."/>
            <person name="Zhang Y."/>
            <person name="Tian X."/>
            <person name="Jiao Y."/>
            <person name="Liang X."/>
            <person name="Jin J."/>
            <person name="Gao L."/>
            <person name="Zheng W."/>
            <person name="Hao B."/>
            <person name="Liu S.-M."/>
            <person name="Wang W."/>
            <person name="Yuan L."/>
            <person name="Cao M."/>
            <person name="McDermott J."/>
            <person name="Samudrala R."/>
            <person name="Wang J."/>
            <person name="Wong G.K.-S."/>
            <person name="Yang H."/>
        </authorList>
    </citation>
    <scope>NUCLEOTIDE SEQUENCE [LARGE SCALE GENOMIC DNA]</scope>
    <source>
        <strain>cv. Nipponbare</strain>
    </source>
</reference>
<reference key="5">
    <citation type="journal article" date="2003" name="Science">
        <title>Collection, mapping, and annotation of over 28,000 cDNA clones from japonica rice.</title>
        <authorList>
            <consortium name="The rice full-length cDNA consortium"/>
        </authorList>
    </citation>
    <scope>NUCLEOTIDE SEQUENCE [LARGE SCALE MRNA]</scope>
    <source>
        <strain>cv. Nipponbare</strain>
    </source>
</reference>
<reference key="6">
    <citation type="journal article" date="2007" name="Plant Physiol.">
        <title>A WUSCHEL-LIKE HOMEOBOX gene represses a YABBY gene expression required for rice leaf development.</title>
        <authorList>
            <person name="Dai M."/>
            <person name="Hu Y."/>
            <person name="Zhao Y."/>
            <person name="Liu H."/>
            <person name="Zhou D.-X."/>
        </authorList>
    </citation>
    <scope>NOMENCLATURE</scope>
</reference>
<reference key="7">
    <citation type="journal article" date="2009" name="Plant Cell">
        <title>The WUSCHEL-related homeobox gene WOX11 is required to activate shoot-borne crown root development in rice.</title>
        <authorList>
            <person name="Zhao Y."/>
            <person name="Hu Y."/>
            <person name="Dai M."/>
            <person name="Huang L."/>
            <person name="Zhou D.X."/>
        </authorList>
    </citation>
    <scope>FUNCTION</scope>
    <scope>SUBCELLULAR LOCATION</scope>
    <scope>TISSUE SPECIFICITY</scope>
    <scope>DEVELOPMENTAL STAGE</scope>
    <scope>INDUCTION BY AUXIN</scope>
    <scope>DISRUPTION PHENOTYPE</scope>
</reference>
<reference key="8">
    <citation type="journal article" date="2015" name="Plant Cell">
        <title>The interaction between rice ERF3 and WOX11 promotes crown root development by regulating gene expression involved in cytokinin signaling.</title>
        <authorList>
            <person name="Zhao Y."/>
            <person name="Cheng S."/>
            <person name="Song Y."/>
            <person name="Huang Y."/>
            <person name="Zhou S."/>
            <person name="Liu X."/>
            <person name="Zhou D.X."/>
        </authorList>
    </citation>
    <scope>FUNCTION</scope>
    <scope>INTERACTION WITH ERF3</scope>
    <scope>DISRUPTION PHENOTYPE</scope>
    <scope>SUBCELLULAR LOCATION</scope>
    <scope>TISSUE SPECIFICITY</scope>
    <scope>DEVELOPMENTAL STAGE</scope>
    <source>
        <strain>cv. Zhonghua 11</strain>
    </source>
</reference>
<reference key="9">
    <citation type="journal article" date="2017" name="J. Exp. Bot.">
        <title>Transcriptional regulatory network of WOX11 is involved in the control of crown root development, cytokinin signals, and redox in rice.</title>
        <authorList>
            <person name="Jiang W."/>
            <person name="Zhou S."/>
            <person name="Zhang Q."/>
            <person name="Song H."/>
            <person name="Zhou D.X."/>
            <person name="Zhao Y."/>
        </authorList>
    </citation>
    <scope>FUNCTION</scope>
</reference>
<reference key="10">
    <citation type="journal article" date="2017" name="Plant Cell">
        <title>Rice homeodomain protein WOX11 recruits a histone acetyltransferase complex to establish programs of cell proliferation of crown root meristem.</title>
        <authorList>
            <person name="Zhou S."/>
            <person name="Jiang W."/>
            <person name="Long F."/>
            <person name="Cheng S."/>
            <person name="Yang W."/>
            <person name="Zhao Y."/>
            <person name="Zhou D.X."/>
        </authorList>
    </citation>
    <scope>FUNCTION</scope>
    <scope>INTERACTION WITH ADA2</scope>
</reference>
<reference key="11">
    <citation type="journal article" date="2018" name="Front. Plant Sci.">
        <title>The YUCCA-auxin-WOX11 module controls crown root development in rice.</title>
        <authorList>
            <person name="Zhang T."/>
            <person name="Li R."/>
            <person name="Xing J."/>
            <person name="Yan L."/>
            <person name="Wang R."/>
            <person name="Zhao Y."/>
        </authorList>
    </citation>
    <scope>FUNCTION</scope>
</reference>
<name>WOX11_ORYSJ</name>